<keyword id="KW-0032">Aminotransferase</keyword>
<keyword id="KW-0663">Pyridoxal phosphate</keyword>
<keyword id="KW-0670">Pyruvate</keyword>
<keyword id="KW-0808">Transferase</keyword>
<organism>
    <name type="scientific">Bacillus anthracis (strain A0248)</name>
    <dbReference type="NCBI Taxonomy" id="592021"/>
    <lineage>
        <taxon>Bacteria</taxon>
        <taxon>Bacillati</taxon>
        <taxon>Bacillota</taxon>
        <taxon>Bacilli</taxon>
        <taxon>Bacillales</taxon>
        <taxon>Bacillaceae</taxon>
        <taxon>Bacillus</taxon>
        <taxon>Bacillus cereus group</taxon>
    </lineage>
</organism>
<protein>
    <recommendedName>
        <fullName evidence="1">2-aminoethylphosphonate--pyruvate transaminase</fullName>
        <ecNumber evidence="1">2.6.1.37</ecNumber>
    </recommendedName>
    <alternativeName>
        <fullName evidence="1">2-aminoethylphosphonate aminotransferase</fullName>
    </alternativeName>
    <alternativeName>
        <fullName evidence="1">AEP transaminase</fullName>
        <shortName evidence="1">AEPT</shortName>
    </alternativeName>
</protein>
<dbReference type="EC" id="2.6.1.37" evidence="1"/>
<dbReference type="EMBL" id="CP001598">
    <property type="protein sequence ID" value="ACQ50674.1"/>
    <property type="molecule type" value="Genomic_DNA"/>
</dbReference>
<dbReference type="RefSeq" id="WP_000138251.1">
    <property type="nucleotide sequence ID" value="NC_012659.1"/>
</dbReference>
<dbReference type="SMR" id="C3P4E3"/>
<dbReference type="GeneID" id="45021330"/>
<dbReference type="KEGG" id="bai:BAA_1408"/>
<dbReference type="HOGENOM" id="CLU_027686_3_1_9"/>
<dbReference type="GO" id="GO:0047304">
    <property type="term" value="F:2-aminoethylphosphonate-pyruvate transaminase activity"/>
    <property type="evidence" value="ECO:0007669"/>
    <property type="project" value="UniProtKB-UniRule"/>
</dbReference>
<dbReference type="GO" id="GO:0019700">
    <property type="term" value="P:organic phosphonate catabolic process"/>
    <property type="evidence" value="ECO:0007669"/>
    <property type="project" value="InterPro"/>
</dbReference>
<dbReference type="Gene3D" id="3.90.1150.10">
    <property type="entry name" value="Aspartate Aminotransferase, domain 1"/>
    <property type="match status" value="1"/>
</dbReference>
<dbReference type="Gene3D" id="3.40.640.10">
    <property type="entry name" value="Type I PLP-dependent aspartate aminotransferase-like (Major domain)"/>
    <property type="match status" value="1"/>
</dbReference>
<dbReference type="HAMAP" id="MF_01376">
    <property type="entry name" value="PhnW_aminotrans_5"/>
    <property type="match status" value="1"/>
</dbReference>
<dbReference type="InterPro" id="IPR000192">
    <property type="entry name" value="Aminotrans_V_dom"/>
</dbReference>
<dbReference type="InterPro" id="IPR012703">
    <property type="entry name" value="NH2EtPonate_pyrv_transaminase"/>
</dbReference>
<dbReference type="InterPro" id="IPR015424">
    <property type="entry name" value="PyrdxlP-dep_Trfase"/>
</dbReference>
<dbReference type="InterPro" id="IPR015421">
    <property type="entry name" value="PyrdxlP-dep_Trfase_major"/>
</dbReference>
<dbReference type="InterPro" id="IPR015422">
    <property type="entry name" value="PyrdxlP-dep_Trfase_small"/>
</dbReference>
<dbReference type="InterPro" id="IPR024169">
    <property type="entry name" value="SP_NH2Trfase/AEP_transaminase"/>
</dbReference>
<dbReference type="NCBIfam" id="TIGR03301">
    <property type="entry name" value="PhnW-AepZ"/>
    <property type="match status" value="1"/>
</dbReference>
<dbReference type="NCBIfam" id="NF010006">
    <property type="entry name" value="PRK13479.1"/>
    <property type="match status" value="1"/>
</dbReference>
<dbReference type="NCBIfam" id="TIGR02326">
    <property type="entry name" value="transamin_PhnW"/>
    <property type="match status" value="1"/>
</dbReference>
<dbReference type="PANTHER" id="PTHR42778">
    <property type="entry name" value="2-AMINOETHYLPHOSPHONATE--PYRUVATE TRANSAMINASE"/>
    <property type="match status" value="1"/>
</dbReference>
<dbReference type="PANTHER" id="PTHR42778:SF1">
    <property type="entry name" value="2-AMINOETHYLPHOSPHONATE--PYRUVATE TRANSAMINASE"/>
    <property type="match status" value="1"/>
</dbReference>
<dbReference type="Pfam" id="PF00266">
    <property type="entry name" value="Aminotran_5"/>
    <property type="match status" value="1"/>
</dbReference>
<dbReference type="PIRSF" id="PIRSF000524">
    <property type="entry name" value="SPT"/>
    <property type="match status" value="1"/>
</dbReference>
<dbReference type="SUPFAM" id="SSF53383">
    <property type="entry name" value="PLP-dependent transferases"/>
    <property type="match status" value="1"/>
</dbReference>
<reference key="1">
    <citation type="submission" date="2009-04" db="EMBL/GenBank/DDBJ databases">
        <title>Genome sequence of Bacillus anthracis A0248.</title>
        <authorList>
            <person name="Dodson R.J."/>
            <person name="Munk A.C."/>
            <person name="Bruce D."/>
            <person name="Detter C."/>
            <person name="Tapia R."/>
            <person name="Sutton G."/>
            <person name="Sims D."/>
            <person name="Brettin T."/>
        </authorList>
    </citation>
    <scope>NUCLEOTIDE SEQUENCE [LARGE SCALE GENOMIC DNA]</scope>
    <source>
        <strain>A0248</strain>
    </source>
</reference>
<gene>
    <name evidence="1" type="primary">phnW</name>
    <name type="ordered locus">BAA_1408</name>
</gene>
<feature type="chain" id="PRO_1000184190" description="2-aminoethylphosphonate--pyruvate transaminase">
    <location>
        <begin position="1"/>
        <end position="365"/>
    </location>
</feature>
<feature type="modified residue" description="N6-(pyridoxal phosphate)lysine" evidence="1">
    <location>
        <position position="194"/>
    </location>
</feature>
<name>PHNW_BACAA</name>
<sequence length="365" mass="41298">MTENHYLLLTPGPLTTTKTVKEVMLYDWCTWDVEYNTMVQKVRAKLVSLATKEEEKYTTVLMQGSGTFSVEAVIGSVIPKNGKLLVCTNGAYGKRIVQMAEMLHIDVVVSQTEEWEPTNIVEVEKILQQDKEITHIAVVHCETTTGIINPIVDVCKLGKQYGKVTLVDAMSSFGGIEIDIAELQIDFLISSANKCIQGVPGFGFVIAQRDELLKCKGQARSLSLDLYDQWETMENQNGKWRFTSPTHVVHAFYQALLELEKEGGVRARYNRYYNNQKLLVNRMGEIGFKPLVNEKYQSPIITSFIYPEGNFEFQQLYNELKRYGFVIYPGKISKVDTFRIGNIGDVHEEDINRLVDSIAKGVVIG</sequence>
<evidence type="ECO:0000255" key="1">
    <source>
        <dbReference type="HAMAP-Rule" id="MF_01376"/>
    </source>
</evidence>
<proteinExistence type="inferred from homology"/>
<accession>C3P4E3</accession>
<comment type="function">
    <text evidence="1">Involved in phosphonate degradation.</text>
</comment>
<comment type="catalytic activity">
    <reaction evidence="1">
        <text>(2-aminoethyl)phosphonate + pyruvate = phosphonoacetaldehyde + L-alanine</text>
        <dbReference type="Rhea" id="RHEA:17021"/>
        <dbReference type="ChEBI" id="CHEBI:15361"/>
        <dbReference type="ChEBI" id="CHEBI:57418"/>
        <dbReference type="ChEBI" id="CHEBI:57972"/>
        <dbReference type="ChEBI" id="CHEBI:58383"/>
        <dbReference type="EC" id="2.6.1.37"/>
    </reaction>
</comment>
<comment type="cofactor">
    <cofactor evidence="1">
        <name>pyridoxal 5'-phosphate</name>
        <dbReference type="ChEBI" id="CHEBI:597326"/>
    </cofactor>
</comment>
<comment type="subunit">
    <text evidence="1">Homodimer.</text>
</comment>
<comment type="similarity">
    <text evidence="1">Belongs to the class-V pyridoxal-phosphate-dependent aminotransferase family. PhnW subfamily.</text>
</comment>